<reference key="1">
    <citation type="journal article" date="2008" name="Environ. Microbiol.">
        <title>The genome of Erwinia tasmaniensis strain Et1/99, a non-pathogenic bacterium in the genus Erwinia.</title>
        <authorList>
            <person name="Kube M."/>
            <person name="Migdoll A.M."/>
            <person name="Mueller I."/>
            <person name="Kuhl H."/>
            <person name="Beck A."/>
            <person name="Reinhardt R."/>
            <person name="Geider K."/>
        </authorList>
    </citation>
    <scope>NUCLEOTIDE SEQUENCE [LARGE SCALE GENOMIC DNA]</scope>
    <source>
        <strain>DSM 17950 / CFBP 7177 / CIP 109463 / NCPPB 4357 / Et1/99</strain>
    </source>
</reference>
<gene>
    <name type="ordered locus">ETA_12720</name>
</gene>
<name>EFPL_ERWT9</name>
<protein>
    <recommendedName>
        <fullName evidence="1">Elongation factor P-like protein</fullName>
    </recommendedName>
</protein>
<comment type="similarity">
    <text evidence="1">Belongs to the elongation factor P family.</text>
</comment>
<accession>B2VIG6</accession>
<sequence>MPRANEIKKGMAVNLNGKLLLVKDIDVQSPSARGASTLYKMRFTDIRSGMKVEERFKGDEIIDTISLSRRQVTFSYIDGDEYVFMDDEDYTPYNFKREQIEDELLFLPEGGIPGIQVLTMDGQILALELPQTVDMEIVETTPGIKGASASARTKPAAMSTGLIIQVPEYLSNGDKIRIHIPERRYMSRAD</sequence>
<proteinExistence type="inferred from homology"/>
<organism>
    <name type="scientific">Erwinia tasmaniensis (strain DSM 17950 / CFBP 7177 / CIP 109463 / NCPPB 4357 / Et1/99)</name>
    <dbReference type="NCBI Taxonomy" id="465817"/>
    <lineage>
        <taxon>Bacteria</taxon>
        <taxon>Pseudomonadati</taxon>
        <taxon>Pseudomonadota</taxon>
        <taxon>Gammaproteobacteria</taxon>
        <taxon>Enterobacterales</taxon>
        <taxon>Erwiniaceae</taxon>
        <taxon>Erwinia</taxon>
    </lineage>
</organism>
<evidence type="ECO:0000255" key="1">
    <source>
        <dbReference type="HAMAP-Rule" id="MF_00646"/>
    </source>
</evidence>
<feature type="chain" id="PRO_1000130917" description="Elongation factor P-like protein">
    <location>
        <begin position="1"/>
        <end position="190"/>
    </location>
</feature>
<keyword id="KW-1185">Reference proteome</keyword>
<dbReference type="EMBL" id="CU468135">
    <property type="protein sequence ID" value="CAO96318.1"/>
    <property type="molecule type" value="Genomic_DNA"/>
</dbReference>
<dbReference type="RefSeq" id="WP_012441012.1">
    <property type="nucleotide sequence ID" value="NC_010694.1"/>
</dbReference>
<dbReference type="SMR" id="B2VIG6"/>
<dbReference type="STRING" id="465817.ETA_12720"/>
<dbReference type="KEGG" id="eta:ETA_12720"/>
<dbReference type="eggNOG" id="COG0231">
    <property type="taxonomic scope" value="Bacteria"/>
</dbReference>
<dbReference type="HOGENOM" id="CLU_074944_2_0_6"/>
<dbReference type="OrthoDB" id="5599402at2"/>
<dbReference type="Proteomes" id="UP000001726">
    <property type="component" value="Chromosome"/>
</dbReference>
<dbReference type="GO" id="GO:0005737">
    <property type="term" value="C:cytoplasm"/>
    <property type="evidence" value="ECO:0007669"/>
    <property type="project" value="InterPro"/>
</dbReference>
<dbReference type="GO" id="GO:0003746">
    <property type="term" value="F:translation elongation factor activity"/>
    <property type="evidence" value="ECO:0007669"/>
    <property type="project" value="UniProtKB-UniRule"/>
</dbReference>
<dbReference type="GO" id="GO:0043043">
    <property type="term" value="P:peptide biosynthetic process"/>
    <property type="evidence" value="ECO:0007669"/>
    <property type="project" value="InterPro"/>
</dbReference>
<dbReference type="CDD" id="cd04470">
    <property type="entry name" value="S1_EF-P_repeat_1"/>
    <property type="match status" value="1"/>
</dbReference>
<dbReference type="CDD" id="cd05794">
    <property type="entry name" value="S1_EF-P_repeat_2"/>
    <property type="match status" value="1"/>
</dbReference>
<dbReference type="FunFam" id="2.40.50.140:FF:000004">
    <property type="entry name" value="Elongation factor P"/>
    <property type="match status" value="1"/>
</dbReference>
<dbReference type="FunFam" id="2.30.30.30:FF:000011">
    <property type="entry name" value="Elongation factor P-like protein"/>
    <property type="match status" value="1"/>
</dbReference>
<dbReference type="FunFam" id="2.40.50.140:FF:000053">
    <property type="entry name" value="Elongation factor P-like protein"/>
    <property type="match status" value="1"/>
</dbReference>
<dbReference type="Gene3D" id="2.30.30.30">
    <property type="match status" value="1"/>
</dbReference>
<dbReference type="Gene3D" id="2.40.50.140">
    <property type="entry name" value="Nucleic acid-binding proteins"/>
    <property type="match status" value="2"/>
</dbReference>
<dbReference type="HAMAP" id="MF_00646">
    <property type="entry name" value="EFP"/>
    <property type="match status" value="1"/>
</dbReference>
<dbReference type="InterPro" id="IPR015365">
    <property type="entry name" value="Elong-fact-P_C"/>
</dbReference>
<dbReference type="InterPro" id="IPR012340">
    <property type="entry name" value="NA-bd_OB-fold"/>
</dbReference>
<dbReference type="InterPro" id="IPR014722">
    <property type="entry name" value="Rib_uL2_dom2"/>
</dbReference>
<dbReference type="InterPro" id="IPR020599">
    <property type="entry name" value="Transl_elong_fac_P/YeiP"/>
</dbReference>
<dbReference type="InterPro" id="IPR013185">
    <property type="entry name" value="Transl_elong_KOW-like"/>
</dbReference>
<dbReference type="InterPro" id="IPR011897">
    <property type="entry name" value="Transl_elong_p-like_YeiP"/>
</dbReference>
<dbReference type="InterPro" id="IPR001059">
    <property type="entry name" value="Transl_elong_P/YeiP_cen"/>
</dbReference>
<dbReference type="InterPro" id="IPR013852">
    <property type="entry name" value="Transl_elong_P/YeiP_CS"/>
</dbReference>
<dbReference type="InterPro" id="IPR008991">
    <property type="entry name" value="Translation_prot_SH3-like_sf"/>
</dbReference>
<dbReference type="NCBIfam" id="NF001810">
    <property type="entry name" value="PRK00529.1"/>
    <property type="match status" value="1"/>
</dbReference>
<dbReference type="NCBIfam" id="NF003392">
    <property type="entry name" value="PRK04542.1"/>
    <property type="match status" value="1"/>
</dbReference>
<dbReference type="NCBIfam" id="TIGR02178">
    <property type="entry name" value="yeiP"/>
    <property type="match status" value="1"/>
</dbReference>
<dbReference type="PANTHER" id="PTHR30053">
    <property type="entry name" value="ELONGATION FACTOR P"/>
    <property type="match status" value="1"/>
</dbReference>
<dbReference type="PANTHER" id="PTHR30053:SF14">
    <property type="entry name" value="TRANSLATION ELONGATION FACTOR KOW-LIKE DOMAIN-CONTAINING PROTEIN"/>
    <property type="match status" value="1"/>
</dbReference>
<dbReference type="Pfam" id="PF01132">
    <property type="entry name" value="EFP"/>
    <property type="match status" value="1"/>
</dbReference>
<dbReference type="Pfam" id="PF08207">
    <property type="entry name" value="EFP_N"/>
    <property type="match status" value="1"/>
</dbReference>
<dbReference type="Pfam" id="PF09285">
    <property type="entry name" value="Elong-fact-P_C"/>
    <property type="match status" value="1"/>
</dbReference>
<dbReference type="PIRSF" id="PIRSF005901">
    <property type="entry name" value="EF-P"/>
    <property type="match status" value="1"/>
</dbReference>
<dbReference type="SMART" id="SM01185">
    <property type="entry name" value="EFP"/>
    <property type="match status" value="1"/>
</dbReference>
<dbReference type="SMART" id="SM00841">
    <property type="entry name" value="Elong-fact-P_C"/>
    <property type="match status" value="1"/>
</dbReference>
<dbReference type="SUPFAM" id="SSF50249">
    <property type="entry name" value="Nucleic acid-binding proteins"/>
    <property type="match status" value="2"/>
</dbReference>
<dbReference type="SUPFAM" id="SSF50104">
    <property type="entry name" value="Translation proteins SH3-like domain"/>
    <property type="match status" value="1"/>
</dbReference>
<dbReference type="PROSITE" id="PS01275">
    <property type="entry name" value="EFP"/>
    <property type="match status" value="1"/>
</dbReference>